<protein>
    <recommendedName>
        <fullName evidence="6">Conotoxin Cl14.1a</fullName>
    </recommendedName>
    <alternativeName>
        <fullName evidence="7">Conotoxin Cal14.1a</fullName>
    </alternativeName>
</protein>
<evidence type="ECO:0000250" key="1"/>
<evidence type="ECO:0000255" key="2"/>
<evidence type="ECO:0000269" key="3">
    <source>
    </source>
</evidence>
<evidence type="ECO:0000269" key="4">
    <source>
    </source>
</evidence>
<evidence type="ECO:0000269" key="5">
    <source>
    </source>
</evidence>
<evidence type="ECO:0000303" key="6">
    <source>
    </source>
</evidence>
<evidence type="ECO:0000303" key="7">
    <source>
    </source>
</evidence>
<evidence type="ECO:0000305" key="8"/>
<evidence type="ECO:0000305" key="9">
    <source>
    </source>
</evidence>
<evidence type="ECO:0000305" key="10">
    <source>
    </source>
</evidence>
<evidence type="ECO:0000305" key="11">
    <source>
    </source>
</evidence>
<evidence type="ECO:0000305" key="12">
    <source>
    </source>
</evidence>
<reference key="1">
    <citation type="journal article" date="2010" name="Mol. Phylogenet. Evol.">
        <title>Evolution of Conus peptide toxins: analysis of Conus californicus Reeve, 1844.</title>
        <authorList>
            <person name="Biggs J.S."/>
            <person name="Watkins M."/>
            <person name="Puillandre N."/>
            <person name="Ownby J.P."/>
            <person name="Lopez-Vera E."/>
            <person name="Christensen S."/>
            <person name="Moreno K.J."/>
            <person name="Bernaldez J."/>
            <person name="Licea-Navarro A."/>
            <person name="Corneli P.S."/>
            <person name="Olivera B.M."/>
        </authorList>
    </citation>
    <scope>NUCLEOTIDE SEQUENCE [GENOMIC DNA]</scope>
</reference>
<reference key="2">
    <citation type="journal article" date="2016" name="Mar. Drugs">
        <title>In vitro effect of the synthetic cal14.1a conotoxin, derived from Conus californicus, on the human parasite Toxoplasma gondii.</title>
        <authorList>
            <person name="De Leon-Nava M.A."/>
            <person name="Romero-Nunez E."/>
            <person name="Luna-Nophal A."/>
            <person name="Bernaldez-Sarabia J."/>
            <person name="Sanchez-Campos L.N."/>
            <person name="Licea-Navarro A.F."/>
            <person name="Morales-Montor J."/>
            <person name="Muniz-Hernandez S."/>
        </authorList>
    </citation>
    <scope>FUNCTION</scope>
    <scope>SYNTHESIS OF 50-66</scope>
</reference>
<reference key="3">
    <citation type="journal article" date="2016" name="Toxins">
        <title>Apoptosis Activation in Human Lung Cancer Cell Lines by a Novel Synthetic Peptide Derived from Conus californicus Venom.</title>
        <authorList>
            <person name="Oroz-Parra I."/>
            <person name="Navarro M."/>
            <person name="Cervantes-Luevano K.E."/>
            <person name="Alvarez-Delgado C."/>
            <person name="Salvesen G."/>
            <person name="Sanchez-Campos L.N."/>
            <person name="Licea-Navarro A.F."/>
        </authorList>
    </citation>
    <scope>FUNCTION ON H1299 AND H1437 LUNG CANCER CELLS</scope>
    <scope>SYNTHESIS OF 50-66</scope>
</reference>
<reference key="4">
    <citation type="journal article" date="2019" name="Mar. Drugs">
        <title>Proapoptotic Index Evaluation of Two Synthetic Peptides Derived from the Coneshell Californiconus californicus in Lung Cancer Cell Line H1299.</title>
        <authorList>
            <person name="Oroz-Parra I."/>
            <person name="Alvarez-Delgado C."/>
            <person name="Cervantes-Luevano K."/>
            <person name="Duenas-Espinoza S."/>
            <person name="Licea-Navarro A.F."/>
        </authorList>
    </citation>
    <scope>FUNCTION ON H1299 LUNG CANCER CELLS</scope>
    <scope>SYNTHESIS OF 50-66</scope>
    <scope>3D-STRUCTURE MODELING</scope>
</reference>
<reference key="5">
    <citation type="journal article" date="2020" name="Onco Targets Ther.">
        <title>MiR-101-3p and Syn-Cal14.1a synergy in suppressing EZH2-induced progression of breast cancer.</title>
        <authorList>
            <person name="Jiang H."/>
            <person name="Li L."/>
            <person name="Zhang J."/>
            <person name="Wan Z."/>
            <person name="Wang Y."/>
            <person name="Hou J."/>
            <person name="Yu Y."/>
        </authorList>
    </citation>
    <scope>FUNCTION</scope>
    <scope>SYNTHESIS OF 50-66</scope>
</reference>
<feature type="signal peptide" evidence="2">
    <location>
        <begin position="1"/>
        <end position="19"/>
    </location>
</feature>
<feature type="propeptide" id="PRO_0000453211" evidence="9">
    <location>
        <begin position="20"/>
        <end position="49"/>
    </location>
</feature>
<feature type="peptide" id="PRO_0000453212" description="Conotoxin Cl14.1a" evidence="9">
    <location>
        <begin position="50"/>
        <end position="66"/>
    </location>
</feature>
<feature type="unsure residue" description="Assigned by comparison with orthologs" evidence="8">
    <location>
        <begin position="20"/>
        <end position="49"/>
    </location>
</feature>
<dbReference type="EMBL" id="FJ959129">
    <property type="protein sequence ID" value="ADB93099.1"/>
    <property type="status" value="ALT_SEQ"/>
    <property type="molecule type" value="Genomic_DNA"/>
</dbReference>
<dbReference type="GO" id="GO:0005576">
    <property type="term" value="C:extracellular region"/>
    <property type="evidence" value="ECO:0007669"/>
    <property type="project" value="UniProtKB-SubCell"/>
</dbReference>
<dbReference type="GO" id="GO:0099106">
    <property type="term" value="F:ion channel regulator activity"/>
    <property type="evidence" value="ECO:0007669"/>
    <property type="project" value="UniProtKB-KW"/>
</dbReference>
<dbReference type="GO" id="GO:0090729">
    <property type="term" value="F:toxin activity"/>
    <property type="evidence" value="ECO:0007669"/>
    <property type="project" value="UniProtKB-KW"/>
</dbReference>
<comment type="function">
    <text evidence="3 4 5 8 10 12">Probable neurotoxin with unknown target (Probable). Possibly targets ion channels (Probable). This peptide could be considered as an apoptosis activator in some cancers (tested on lung and breast cancer cell lines) (PubMed:26861394, PubMed:31861952, PubMed:33061442). Provokes the decrease of H1299 lung cancer cells viability after 24 hours treatment, and induces a high Bax/Bcl-2 ratio, which suggests that this peptide can activate apoptosis in H1299 cells (PubMed:31861952). In addition, H1299 and H1437 lung cancer cell lines treated with this peptide have decreased cell viability, activated caspases, and reduced expression of the pro-survival protein NF-kappa-B (NFKB1), indicating activation of apoptosis (PubMed:26861394). In synergy with MicroRNA-101-3p, this synthetic peptide inhibits breast cancer cells (SK-BR-3 and MCF-7) migration, invasion, and proliferation through suppressing the expression of the methyltransferase EZH2 (PubMed:33061442). In parallel, this synergy treatment is able to promote the apoptosis of breast cancer cells (PubMed:33061442). Against microbes, this synthetic toxin (at micromolar concentrations) lowers viability and inhibits host cell invasion by the opportunistic parasite Toxoplasma gondii (tachyzoite form) (PubMed:27070627). In addition, it permits T.gondii intracellular replication to decrease while viability of the host cell is unaffected (PubMed:27070627).</text>
</comment>
<comment type="subcellular location">
    <subcellularLocation>
        <location evidence="10 11">Secreted</location>
    </subcellularLocation>
</comment>
<comment type="tissue specificity">
    <text evidence="10 11">Expressed by the venom duct.</text>
</comment>
<comment type="domain">
    <text evidence="8">The cysteine framework is XIV (C-C-C-C).</text>
</comment>
<comment type="PTM">
    <text evidence="1">Contains 2 disulfide bonds.</text>
</comment>
<comment type="similarity">
    <text evidence="8">Belongs to the conotoxin L superfamily.</text>
</comment>
<comment type="sequence caution" evidence="9">
    <conflict type="miscellaneous discrepancy">
        <sequence resource="EMBL-CDS" id="ADB93099"/>
    </conflict>
    <text>Submitted sequence does not correspond to the one indicated in the paper. It may have been erroneously substituted by that of conotoxin Cl14.2c.</text>
</comment>
<keyword id="KW-0929">Antimicrobial</keyword>
<keyword id="KW-0165">Cleavage on pair of basic residues</keyword>
<keyword id="KW-1015">Disulfide bond</keyword>
<keyword id="KW-0872">Ion channel impairing toxin</keyword>
<keyword id="KW-0528">Neurotoxin</keyword>
<keyword id="KW-0964">Secreted</keyword>
<keyword id="KW-0732">Signal</keyword>
<keyword id="KW-0800">Toxin</keyword>
<accession>P0DUQ5</accession>
<name>CLE1A_CONCL</name>
<sequence>MNVTAMFIVLLLTMPLTDGFNIRAINGGELFGLVQRDAGNALDHGFYRRGDCPPWCVGARCRAEKC</sequence>
<proteinExistence type="inferred from homology"/>
<organism>
    <name type="scientific">Californiconus californicus</name>
    <name type="common">California cone</name>
    <name type="synonym">Conus californicus</name>
    <dbReference type="NCBI Taxonomy" id="1736779"/>
    <lineage>
        <taxon>Eukaryota</taxon>
        <taxon>Metazoa</taxon>
        <taxon>Spiralia</taxon>
        <taxon>Lophotrochozoa</taxon>
        <taxon>Mollusca</taxon>
        <taxon>Gastropoda</taxon>
        <taxon>Caenogastropoda</taxon>
        <taxon>Neogastropoda</taxon>
        <taxon>Conoidea</taxon>
        <taxon>Conidae</taxon>
        <taxon>Californiconus</taxon>
    </lineage>
</organism>